<evidence type="ECO:0000255" key="1">
    <source>
        <dbReference type="HAMAP-Rule" id="MF_01813"/>
    </source>
</evidence>
<sequence length="250" mass="28236">MNETEKSTHFGYQTVPTDQKTDKVKHVFESVAAKYDLMNDLMSLGIHRWWKDFAITQCRLRTGQRILDLAGGTGDLAKRISPLVGDEGEVVIADINAAMLNVGRRRLLDQGIFRNIQFIQADAEKLPFPNNFFDRIVIGFGLRNVTNQLAALQSMHRVIKPGGFVVILEFSKPTLAPLKAVYDAYSFQLLPRLGKLVAKDEESYRYLVESIRMHPDQEALLSKMTDAGFEDCDYHNLSGGIVAVHRGYKF</sequence>
<proteinExistence type="inferred from homology"/>
<organism>
    <name type="scientific">Coxiella burnetii (strain RSA 493 / Nine Mile phase I)</name>
    <dbReference type="NCBI Taxonomy" id="227377"/>
    <lineage>
        <taxon>Bacteria</taxon>
        <taxon>Pseudomonadati</taxon>
        <taxon>Pseudomonadota</taxon>
        <taxon>Gammaproteobacteria</taxon>
        <taxon>Legionellales</taxon>
        <taxon>Coxiellaceae</taxon>
        <taxon>Coxiella</taxon>
    </lineage>
</organism>
<comment type="function">
    <text evidence="1">Methyltransferase required for the conversion of demethylmenaquinol (DMKH2) to menaquinol (MKH2) and the conversion of 2-polyprenyl-6-methoxy-1,4-benzoquinol (DDMQH2) to 2-polyprenyl-3-methyl-6-methoxy-1,4-benzoquinol (DMQH2).</text>
</comment>
<comment type="catalytic activity">
    <reaction evidence="1">
        <text>a 2-demethylmenaquinol + S-adenosyl-L-methionine = a menaquinol + S-adenosyl-L-homocysteine + H(+)</text>
        <dbReference type="Rhea" id="RHEA:42640"/>
        <dbReference type="Rhea" id="RHEA-COMP:9539"/>
        <dbReference type="Rhea" id="RHEA-COMP:9563"/>
        <dbReference type="ChEBI" id="CHEBI:15378"/>
        <dbReference type="ChEBI" id="CHEBI:18151"/>
        <dbReference type="ChEBI" id="CHEBI:55437"/>
        <dbReference type="ChEBI" id="CHEBI:57856"/>
        <dbReference type="ChEBI" id="CHEBI:59789"/>
        <dbReference type="EC" id="2.1.1.163"/>
    </reaction>
</comment>
<comment type="catalytic activity">
    <reaction evidence="1">
        <text>a 2-methoxy-6-(all-trans-polyprenyl)benzene-1,4-diol + S-adenosyl-L-methionine = a 5-methoxy-2-methyl-3-(all-trans-polyprenyl)benzene-1,4-diol + S-adenosyl-L-homocysteine + H(+)</text>
        <dbReference type="Rhea" id="RHEA:28286"/>
        <dbReference type="Rhea" id="RHEA-COMP:10858"/>
        <dbReference type="Rhea" id="RHEA-COMP:10859"/>
        <dbReference type="ChEBI" id="CHEBI:15378"/>
        <dbReference type="ChEBI" id="CHEBI:57856"/>
        <dbReference type="ChEBI" id="CHEBI:59789"/>
        <dbReference type="ChEBI" id="CHEBI:84166"/>
        <dbReference type="ChEBI" id="CHEBI:84167"/>
        <dbReference type="EC" id="2.1.1.201"/>
    </reaction>
</comment>
<comment type="pathway">
    <text evidence="1">Quinol/quinone metabolism; menaquinone biosynthesis; menaquinol from 1,4-dihydroxy-2-naphthoate: step 2/2.</text>
</comment>
<comment type="pathway">
    <text evidence="1">Cofactor biosynthesis; ubiquinone biosynthesis.</text>
</comment>
<comment type="similarity">
    <text evidence="1">Belongs to the class I-like SAM-binding methyltransferase superfamily. MenG/UbiE family.</text>
</comment>
<accession>Q83A90</accession>
<name>UBIE_COXBU</name>
<dbReference type="EC" id="2.1.1.163" evidence="1"/>
<dbReference type="EC" id="2.1.1.201" evidence="1"/>
<dbReference type="EMBL" id="AE016828">
    <property type="protein sequence ID" value="AAO91505.1"/>
    <property type="molecule type" value="Genomic_DNA"/>
</dbReference>
<dbReference type="RefSeq" id="NP_820991.1">
    <property type="nucleotide sequence ID" value="NC_002971.4"/>
</dbReference>
<dbReference type="RefSeq" id="WP_010958603.1">
    <property type="nucleotide sequence ID" value="NZ_CCYB01000066.1"/>
</dbReference>
<dbReference type="SMR" id="Q83A90"/>
<dbReference type="STRING" id="227377.CBU_2017"/>
<dbReference type="EnsemblBacteria" id="AAO91505">
    <property type="protein sequence ID" value="AAO91505"/>
    <property type="gene ID" value="CBU_2017"/>
</dbReference>
<dbReference type="GeneID" id="1209930"/>
<dbReference type="KEGG" id="cbu:CBU_2017"/>
<dbReference type="PATRIC" id="fig|227377.7.peg.2007"/>
<dbReference type="eggNOG" id="COG2226">
    <property type="taxonomic scope" value="Bacteria"/>
</dbReference>
<dbReference type="HOGENOM" id="CLU_037990_0_0_6"/>
<dbReference type="OrthoDB" id="9808140at2"/>
<dbReference type="UniPathway" id="UPA00079">
    <property type="reaction ID" value="UER00169"/>
</dbReference>
<dbReference type="UniPathway" id="UPA00232"/>
<dbReference type="Proteomes" id="UP000002671">
    <property type="component" value="Chromosome"/>
</dbReference>
<dbReference type="GO" id="GO:0008425">
    <property type="term" value="F:2-methoxy-6-polyprenyl-1,4-benzoquinol methyltransferase activity"/>
    <property type="evidence" value="ECO:0000318"/>
    <property type="project" value="GO_Central"/>
</dbReference>
<dbReference type="GO" id="GO:0043770">
    <property type="term" value="F:demethylmenaquinone methyltransferase activity"/>
    <property type="evidence" value="ECO:0007669"/>
    <property type="project" value="UniProtKB-UniRule"/>
</dbReference>
<dbReference type="GO" id="GO:0009060">
    <property type="term" value="P:aerobic respiration"/>
    <property type="evidence" value="ECO:0007669"/>
    <property type="project" value="UniProtKB-UniRule"/>
</dbReference>
<dbReference type="GO" id="GO:0009234">
    <property type="term" value="P:menaquinone biosynthetic process"/>
    <property type="evidence" value="ECO:0007669"/>
    <property type="project" value="UniProtKB-UniRule"/>
</dbReference>
<dbReference type="GO" id="GO:0032259">
    <property type="term" value="P:methylation"/>
    <property type="evidence" value="ECO:0007669"/>
    <property type="project" value="UniProtKB-KW"/>
</dbReference>
<dbReference type="GO" id="GO:0006744">
    <property type="term" value="P:ubiquinone biosynthetic process"/>
    <property type="evidence" value="ECO:0000318"/>
    <property type="project" value="GO_Central"/>
</dbReference>
<dbReference type="CDD" id="cd02440">
    <property type="entry name" value="AdoMet_MTases"/>
    <property type="match status" value="1"/>
</dbReference>
<dbReference type="Gene3D" id="3.40.50.150">
    <property type="entry name" value="Vaccinia Virus protein VP39"/>
    <property type="match status" value="1"/>
</dbReference>
<dbReference type="HAMAP" id="MF_01813">
    <property type="entry name" value="MenG_UbiE_methyltr"/>
    <property type="match status" value="1"/>
</dbReference>
<dbReference type="InterPro" id="IPR029063">
    <property type="entry name" value="SAM-dependent_MTases_sf"/>
</dbReference>
<dbReference type="InterPro" id="IPR004033">
    <property type="entry name" value="UbiE/COQ5_MeTrFase"/>
</dbReference>
<dbReference type="InterPro" id="IPR023576">
    <property type="entry name" value="UbiE/COQ5_MeTrFase_CS"/>
</dbReference>
<dbReference type="NCBIfam" id="TIGR01934">
    <property type="entry name" value="MenG_MenH_UbiE"/>
    <property type="match status" value="1"/>
</dbReference>
<dbReference type="NCBIfam" id="NF001240">
    <property type="entry name" value="PRK00216.1-1"/>
    <property type="match status" value="1"/>
</dbReference>
<dbReference type="NCBIfam" id="NF001244">
    <property type="entry name" value="PRK00216.1-5"/>
    <property type="match status" value="1"/>
</dbReference>
<dbReference type="PANTHER" id="PTHR43591:SF24">
    <property type="entry name" value="2-METHOXY-6-POLYPRENYL-1,4-BENZOQUINOL METHYLASE, MITOCHONDRIAL"/>
    <property type="match status" value="1"/>
</dbReference>
<dbReference type="PANTHER" id="PTHR43591">
    <property type="entry name" value="METHYLTRANSFERASE"/>
    <property type="match status" value="1"/>
</dbReference>
<dbReference type="Pfam" id="PF01209">
    <property type="entry name" value="Ubie_methyltran"/>
    <property type="match status" value="1"/>
</dbReference>
<dbReference type="SUPFAM" id="SSF53335">
    <property type="entry name" value="S-adenosyl-L-methionine-dependent methyltransferases"/>
    <property type="match status" value="1"/>
</dbReference>
<dbReference type="PROSITE" id="PS51608">
    <property type="entry name" value="SAM_MT_UBIE"/>
    <property type="match status" value="1"/>
</dbReference>
<dbReference type="PROSITE" id="PS01183">
    <property type="entry name" value="UBIE_1"/>
    <property type="match status" value="1"/>
</dbReference>
<dbReference type="PROSITE" id="PS01184">
    <property type="entry name" value="UBIE_2"/>
    <property type="match status" value="1"/>
</dbReference>
<gene>
    <name evidence="1" type="primary">ubiE</name>
    <name type="ordered locus">CBU_2017</name>
</gene>
<reference key="1">
    <citation type="journal article" date="2003" name="Proc. Natl. Acad. Sci. U.S.A.">
        <title>Complete genome sequence of the Q-fever pathogen, Coxiella burnetii.</title>
        <authorList>
            <person name="Seshadri R."/>
            <person name="Paulsen I.T."/>
            <person name="Eisen J.A."/>
            <person name="Read T.D."/>
            <person name="Nelson K.E."/>
            <person name="Nelson W.C."/>
            <person name="Ward N.L."/>
            <person name="Tettelin H."/>
            <person name="Davidsen T.M."/>
            <person name="Beanan M.J."/>
            <person name="DeBoy R.T."/>
            <person name="Daugherty S.C."/>
            <person name="Brinkac L.M."/>
            <person name="Madupu R."/>
            <person name="Dodson R.J."/>
            <person name="Khouri H.M."/>
            <person name="Lee K.H."/>
            <person name="Carty H.A."/>
            <person name="Scanlan D."/>
            <person name="Heinzen R.A."/>
            <person name="Thompson H.A."/>
            <person name="Samuel J.E."/>
            <person name="Fraser C.M."/>
            <person name="Heidelberg J.F."/>
        </authorList>
    </citation>
    <scope>NUCLEOTIDE SEQUENCE [LARGE SCALE GENOMIC DNA]</scope>
    <source>
        <strain>RSA 493 / Nine Mile phase I</strain>
    </source>
</reference>
<feature type="chain" id="PRO_0000193271" description="Ubiquinone/menaquinone biosynthesis C-methyltransferase UbiE">
    <location>
        <begin position="1"/>
        <end position="250"/>
    </location>
</feature>
<feature type="binding site" evidence="1">
    <location>
        <position position="73"/>
    </location>
    <ligand>
        <name>S-adenosyl-L-methionine</name>
        <dbReference type="ChEBI" id="CHEBI:59789"/>
    </ligand>
</feature>
<feature type="binding site" evidence="1">
    <location>
        <position position="94"/>
    </location>
    <ligand>
        <name>S-adenosyl-L-methionine</name>
        <dbReference type="ChEBI" id="CHEBI:59789"/>
    </ligand>
</feature>
<feature type="binding site" evidence="1">
    <location>
        <begin position="122"/>
        <end position="123"/>
    </location>
    <ligand>
        <name>S-adenosyl-L-methionine</name>
        <dbReference type="ChEBI" id="CHEBI:59789"/>
    </ligand>
</feature>
<protein>
    <recommendedName>
        <fullName evidence="1">Ubiquinone/menaquinone biosynthesis C-methyltransferase UbiE</fullName>
        <ecNumber evidence="1">2.1.1.163</ecNumber>
        <ecNumber evidence="1">2.1.1.201</ecNumber>
    </recommendedName>
    <alternativeName>
        <fullName evidence="1">2-methoxy-6-polyprenyl-1,4-benzoquinol methylase</fullName>
    </alternativeName>
    <alternativeName>
        <fullName evidence="1">Demethylmenaquinone methyltransferase</fullName>
    </alternativeName>
</protein>
<keyword id="KW-0474">Menaquinone biosynthesis</keyword>
<keyword id="KW-0489">Methyltransferase</keyword>
<keyword id="KW-1185">Reference proteome</keyword>
<keyword id="KW-0949">S-adenosyl-L-methionine</keyword>
<keyword id="KW-0808">Transferase</keyword>
<keyword id="KW-0831">Ubiquinone biosynthesis</keyword>